<reference key="1">
    <citation type="journal article" date="2016" name="J. Antibiot.">
        <title>Genome mining of the sordarin biosynthetic gene cluster from Sordaria araneosa Cain ATCC 36386: characterization of cycloaraneosene synthase and GDP-6-deoxyaltrose transferase.</title>
        <authorList>
            <person name="Kudo F."/>
            <person name="Matsuura Y."/>
            <person name="Hayashi T."/>
            <person name="Fukushima M."/>
            <person name="Eguchi T."/>
        </authorList>
    </citation>
    <scope>NUCLEOTIDE SEQUENCE [GENOMIC DNA]</scope>
    <scope>FUNCTION</scope>
    <scope>PATHWAY</scope>
    <source>
        <strain>ATCC 36386 / NRRL 3196</strain>
    </source>
</reference>
<proteinExistence type="inferred from homology"/>
<gene>
    <name evidence="6" type="primary">sdnQ</name>
</gene>
<evidence type="ECO:0000250" key="1">
    <source>
        <dbReference type="UniProtKB" id="P04798"/>
    </source>
</evidence>
<evidence type="ECO:0000255" key="2"/>
<evidence type="ECO:0000255" key="3">
    <source>
        <dbReference type="PROSITE-ProRule" id="PRU00498"/>
    </source>
</evidence>
<evidence type="ECO:0000256" key="4">
    <source>
        <dbReference type="SAM" id="MobiDB-lite"/>
    </source>
</evidence>
<evidence type="ECO:0000269" key="5">
    <source>
    </source>
</evidence>
<evidence type="ECO:0000303" key="6">
    <source>
    </source>
</evidence>
<evidence type="ECO:0000305" key="7"/>
<evidence type="ECO:0000305" key="8">
    <source>
    </source>
</evidence>
<protein>
    <recommendedName>
        <fullName evidence="6">Cytochrome P450 monooxygenase sdnQ</fullName>
        <ecNumber evidence="8">1.-.-.-</ecNumber>
    </recommendedName>
    <alternativeName>
        <fullName evidence="6">Sordarin/hypoxysordarin biosynthesis cluster protein Q</fullName>
    </alternativeName>
</protein>
<dbReference type="EC" id="1.-.-.-" evidence="8"/>
<dbReference type="EMBL" id="LC079035">
    <property type="protein sequence ID" value="BAV32161.1"/>
    <property type="molecule type" value="Genomic_DNA"/>
</dbReference>
<dbReference type="SMR" id="A0A1B4XBI1"/>
<dbReference type="GlyCosmos" id="A0A1B4XBI1">
    <property type="glycosylation" value="1 site, No reported glycans"/>
</dbReference>
<dbReference type="GO" id="GO:0016020">
    <property type="term" value="C:membrane"/>
    <property type="evidence" value="ECO:0007669"/>
    <property type="project" value="UniProtKB-SubCell"/>
</dbReference>
<dbReference type="GO" id="GO:0020037">
    <property type="term" value="F:heme binding"/>
    <property type="evidence" value="ECO:0007669"/>
    <property type="project" value="InterPro"/>
</dbReference>
<dbReference type="GO" id="GO:0005506">
    <property type="term" value="F:iron ion binding"/>
    <property type="evidence" value="ECO:0007669"/>
    <property type="project" value="InterPro"/>
</dbReference>
<dbReference type="GO" id="GO:0004497">
    <property type="term" value="F:monooxygenase activity"/>
    <property type="evidence" value="ECO:0007669"/>
    <property type="project" value="UniProtKB-KW"/>
</dbReference>
<dbReference type="GO" id="GO:0016705">
    <property type="term" value="F:oxidoreductase activity, acting on paired donors, with incorporation or reduction of molecular oxygen"/>
    <property type="evidence" value="ECO:0007669"/>
    <property type="project" value="InterPro"/>
</dbReference>
<dbReference type="GO" id="GO:0017000">
    <property type="term" value="P:antibiotic biosynthetic process"/>
    <property type="evidence" value="ECO:0007669"/>
    <property type="project" value="UniProtKB-KW"/>
</dbReference>
<dbReference type="GO" id="GO:0019748">
    <property type="term" value="P:secondary metabolic process"/>
    <property type="evidence" value="ECO:0007669"/>
    <property type="project" value="UniProtKB-ARBA"/>
</dbReference>
<dbReference type="CDD" id="cd11041">
    <property type="entry name" value="CYP503A1-like"/>
    <property type="match status" value="1"/>
</dbReference>
<dbReference type="Gene3D" id="1.10.630.10">
    <property type="entry name" value="Cytochrome P450"/>
    <property type="match status" value="1"/>
</dbReference>
<dbReference type="InterPro" id="IPR001128">
    <property type="entry name" value="Cyt_P450"/>
</dbReference>
<dbReference type="InterPro" id="IPR017972">
    <property type="entry name" value="Cyt_P450_CS"/>
</dbReference>
<dbReference type="InterPro" id="IPR002403">
    <property type="entry name" value="Cyt_P450_E_grp-IV"/>
</dbReference>
<dbReference type="InterPro" id="IPR036396">
    <property type="entry name" value="Cyt_P450_sf"/>
</dbReference>
<dbReference type="PANTHER" id="PTHR46206">
    <property type="entry name" value="CYTOCHROME P450"/>
    <property type="match status" value="1"/>
</dbReference>
<dbReference type="PANTHER" id="PTHR46206:SF2">
    <property type="entry name" value="CYTOCHROME P450 MONOOXYGENASE AUSG-RELATED"/>
    <property type="match status" value="1"/>
</dbReference>
<dbReference type="Pfam" id="PF00067">
    <property type="entry name" value="p450"/>
    <property type="match status" value="1"/>
</dbReference>
<dbReference type="PRINTS" id="PR00465">
    <property type="entry name" value="EP450IV"/>
</dbReference>
<dbReference type="SUPFAM" id="SSF48264">
    <property type="entry name" value="Cytochrome P450"/>
    <property type="match status" value="1"/>
</dbReference>
<dbReference type="PROSITE" id="PS00086">
    <property type="entry name" value="CYTOCHROME_P450"/>
    <property type="match status" value="1"/>
</dbReference>
<sequence>MDDPSIASGFQQGTGRTTGANGTQIQREGLDGLLRQYPIQCIGTSLLVALLTTIIIYYSSSSSFPSATIKKTPPIPEINPLGGIFYPSKTKAAITAYLTNARGLVTDFFRQNPGKLAAQLHTQIGTIIVLASSTAEEIAHDERFHLRKQTAKTFNAHLPGFEVFRDDYNNHLMKNVVTKYFNKQLTKVTGILAHEMDLALGELFTTAKEGQQWTEIPLHATALQIVARLSGRVFLGEDLGRDPEWLRITAGYAGVVTMAFADLSKWPAWLRSTANRFLPRCKASREYMDGVRRKLRPVIAQRRKERRTSSREYREYNDAIEWFELESNGNAYDPEIVQLSLSLAAIHTAGDLLAQTLTEVATHCEIIEPLKEEMRGILAKGGWQKSSLDKMILLDSVIKESQRRKPLATLSMGRIAVTDAKLSDGTVVPKDSTVSIDAGLMWDPSIYAQPDEWDPYRFVRQRKGSLEKQRLAELTTTAPEHLAFGHGMHACPGRFFAANEVKIAMIKILLGYDIKFADGVEPKVMVHGITLDPDRRVRLSIWRREDGHGGF</sequence>
<feature type="chain" id="PRO_0000441053" description="Cytochrome P450 monooxygenase sdnQ">
    <location>
        <begin position="1"/>
        <end position="551"/>
    </location>
</feature>
<feature type="transmembrane region" description="Helical" evidence="2">
    <location>
        <begin position="41"/>
        <end position="57"/>
    </location>
</feature>
<feature type="region of interest" description="Disordered" evidence="4">
    <location>
        <begin position="1"/>
        <end position="23"/>
    </location>
</feature>
<feature type="compositionally biased region" description="Polar residues" evidence="4">
    <location>
        <begin position="8"/>
        <end position="23"/>
    </location>
</feature>
<feature type="binding site" description="axial binding residue" evidence="1">
    <location>
        <position position="491"/>
    </location>
    <ligand>
        <name>heme</name>
        <dbReference type="ChEBI" id="CHEBI:30413"/>
    </ligand>
    <ligandPart>
        <name>Fe</name>
        <dbReference type="ChEBI" id="CHEBI:18248"/>
    </ligandPart>
</feature>
<feature type="glycosylation site" description="N-linked (GlcNAc...) asparagine" evidence="3">
    <location>
        <position position="21"/>
    </location>
</feature>
<comment type="function">
    <text evidence="5">Cytochrome P450 monooxygenase; part of the gene cluster that mediates the biosynthesis of sordarin and hypoxysordarin, glycoside antibiotics with a unique tetracyclic diterpene aglycone structure (PubMed:27072286). First, the geranylgeranyl diphosphate synthase sdnC constructs GGDP from farnesyl diphosphate and isopentenyl diphosphate (PubMed:27072286). The diterpene cyclase sdnA then catalyzes the cyclization of GGDP to afford cycloaraneosene (PubMed:27072286). Cycloaraneosene is then hydroxylated four times by the putative cytochrome P450 monooxygenases sdnB, sdnE, sdnF and sdnH to give a hydroxylated cycloaraneosene derivative such as cycloaraneosene-8,9,13,19-tetraol (PubMed:27072286). Although the order of the hydroxylations is unclear, at least C8, C9 and C13 of the cycloaraneosene skeleton are hydroxylated before the sordaricin formation (PubMed:27072286). Dehydration of the 13-hydroxy group of the hydroxylated cycloaraneosene derivative might be catalyzed by an unassigned hypothetical protein such as sdnG and sdnP to construct the cyclopentadiene moiety (PubMed:27072286). The FAD-dependent oxidoreductase sdnN is proposed to catalyze the oxidation at C9 of the hydroxylated cycloaraneosene derivative and also catalyze the Baeyer-Villiger oxidation to give the lactone intermediate (PubMed:27072286). The presumed lactone intermediate would be hydrolyzed to give an acrolein moiety and a carboxylate moiety (PubMed:27072286). Then, [4+2]cycloaddition would occur between the acrolein moiety and the cyclopentadiene moiety to give sordaricin (PubMed:27072286). SdnN might also be involved in the [4+2]cycloaddition after the hypothesized oxidation to accommodate the oxidized product and prompt the [4+2]cycloaddition (PubMed:27072286). GDP-6-deoxy-D-altrose may be biosynthesized from GDP-D-mannose by the putative GDP-mannose-4,6-dehydratase sdnI and the short-chain dehydrogenase sdnK (PubMed:27072286). The glycosyltransferase sdnJ catalyzes the attachment of 6-deoxy-D-altrose onto the 19-hydroxy group of sordaricin to give 4'-O-demethylsordarin (PubMed:27072286). The methyltransferase sdnD would complete the biosynthesis of sordarin (PubMed:27072286). Sordarin can be further modified into hypoxysordarin (PubMed:27072286). The unique acyl chain at the 3'-hydroxy group of hypoxysordarin would be constructed by an iterative type I PKS sdnO and the trans-acting polyketide methyltransferase sdnL. SdnL would be responsible for the introduction of an alpha-methyl group of the polyketide chain (PubMed:27072286). Alternatively, the beta-lactamase-like protein sdnR might be responsible for the cleavage and transfer of the polyketide chain from the PKS sdnO to sordarin (PubMed:27072286). Two putative cytochrome P450 monooxygenases, sdnQ and sdnT, might catalyze the epoxidations of the polyketide chain to complete the biosynthesis of hypoxysordarin (PubMed:27072286). Transcriptional regulators sdnM and sdnS are presumably encoded for the transcriptional regulation of the expression of the sdn gene cluster (PubMed:27072286).</text>
</comment>
<comment type="cofactor">
    <cofactor evidence="1">
        <name>heme</name>
        <dbReference type="ChEBI" id="CHEBI:30413"/>
    </cofactor>
</comment>
<comment type="pathway">
    <text evidence="8">Antibiotic biosynthesis.</text>
</comment>
<comment type="subcellular location">
    <subcellularLocation>
        <location evidence="2">Membrane</location>
        <topology evidence="2">Single-pass membrane protein</topology>
    </subcellularLocation>
</comment>
<comment type="similarity">
    <text evidence="7">Belongs to the cytochrome P450 family.</text>
</comment>
<keyword id="KW-0045">Antibiotic biosynthesis</keyword>
<keyword id="KW-0325">Glycoprotein</keyword>
<keyword id="KW-0349">Heme</keyword>
<keyword id="KW-0408">Iron</keyword>
<keyword id="KW-0472">Membrane</keyword>
<keyword id="KW-0479">Metal-binding</keyword>
<keyword id="KW-0503">Monooxygenase</keyword>
<keyword id="KW-0560">Oxidoreductase</keyword>
<keyword id="KW-0812">Transmembrane</keyword>
<keyword id="KW-1133">Transmembrane helix</keyword>
<name>SDNQ_SORAA</name>
<organism>
    <name type="scientific">Sordaria araneosa</name>
    <name type="common">Pleurage araneosa</name>
    <dbReference type="NCBI Taxonomy" id="573841"/>
    <lineage>
        <taxon>Eukaryota</taxon>
        <taxon>Fungi</taxon>
        <taxon>Dikarya</taxon>
        <taxon>Ascomycota</taxon>
        <taxon>Pezizomycotina</taxon>
        <taxon>Sordariomycetes</taxon>
        <taxon>Sordariomycetidae</taxon>
        <taxon>Sordariales</taxon>
        <taxon>Sordariaceae</taxon>
        <taxon>Sordaria</taxon>
    </lineage>
</organism>
<accession>A0A1B4XBI1</accession>